<gene>
    <name evidence="14" type="primary">HINT2</name>
</gene>
<protein>
    <recommendedName>
        <fullName evidence="13">Adenosine 5'-monophosphoramidase HINT2</fullName>
        <ecNumber evidence="4 7">3.9.1.-</ecNumber>
    </recommendedName>
    <alternativeName>
        <fullName evidence="11">HINT-3</fullName>
    </alternativeName>
    <alternativeName>
        <fullName evidence="8">HIT-17kDa</fullName>
    </alternativeName>
    <alternativeName>
        <fullName evidence="12">Histidine triad nucleotide-binding protein 2, mitochondrial</fullName>
        <shortName evidence="10">HINT-2</shortName>
    </alternativeName>
    <alternativeName>
        <fullName evidence="9">PKCI-1-related HIT protein</fullName>
    </alternativeName>
</protein>
<reference key="1">
    <citation type="submission" date="2001-03" db="EMBL/GenBank/DDBJ databases">
        <title>HIT-17kDa is a new protein from the HIT family with high homology to PKCI-1.</title>
        <authorList>
            <person name="Magnino F."/>
            <person name="Dufour J.-F."/>
        </authorList>
    </citation>
    <scope>NUCLEOTIDE SEQUENCE [MRNA]</scope>
    <source>
        <tissue>Liver</tissue>
    </source>
</reference>
<reference key="2">
    <citation type="submission" date="2001-04" db="EMBL/GenBank/DDBJ databases">
        <title>PKCI-1-related HIT protein.</title>
        <authorList>
            <person name="Takada F."/>
            <person name="Lugus J.J."/>
            <person name="Beggs A.H."/>
        </authorList>
    </citation>
    <scope>NUCLEOTIDE SEQUENCE [MRNA]</scope>
</reference>
<reference key="3">
    <citation type="submission" date="2002-03" db="EMBL/GenBank/DDBJ databases">
        <title>Hint-2 genomic sequence.</title>
        <authorList>
            <person name="Takada F."/>
            <person name="Lugus J.J."/>
            <person name="Beggs A.H."/>
        </authorList>
    </citation>
    <scope>NUCLEOTIDE SEQUENCE [GENOMIC DNA]</scope>
</reference>
<reference key="4">
    <citation type="submission" date="2001-03" db="EMBL/GenBank/DDBJ databases">
        <title>HINT-3 is a novel member of the histidine triad protein family.</title>
        <authorList>
            <person name="Chen H."/>
            <person name="Peng J."/>
            <person name="Huang C.-H."/>
        </authorList>
    </citation>
    <scope>NUCLEOTIDE SEQUENCE [MRNA]</scope>
    <source>
        <tissue>Kidney</tissue>
    </source>
</reference>
<reference key="5">
    <citation type="journal article" date="2004" name="Nature">
        <title>DNA sequence and analysis of human chromosome 9.</title>
        <authorList>
            <person name="Humphray S.J."/>
            <person name="Oliver K."/>
            <person name="Hunt A.R."/>
            <person name="Plumb R.W."/>
            <person name="Loveland J.E."/>
            <person name="Howe K.L."/>
            <person name="Andrews T.D."/>
            <person name="Searle S."/>
            <person name="Hunt S.E."/>
            <person name="Scott C.E."/>
            <person name="Jones M.C."/>
            <person name="Ainscough R."/>
            <person name="Almeida J.P."/>
            <person name="Ambrose K.D."/>
            <person name="Ashwell R.I.S."/>
            <person name="Babbage A.K."/>
            <person name="Babbage S."/>
            <person name="Bagguley C.L."/>
            <person name="Bailey J."/>
            <person name="Banerjee R."/>
            <person name="Barker D.J."/>
            <person name="Barlow K.F."/>
            <person name="Bates K."/>
            <person name="Beasley H."/>
            <person name="Beasley O."/>
            <person name="Bird C.P."/>
            <person name="Bray-Allen S."/>
            <person name="Brown A.J."/>
            <person name="Brown J.Y."/>
            <person name="Burford D."/>
            <person name="Burrill W."/>
            <person name="Burton J."/>
            <person name="Carder C."/>
            <person name="Carter N.P."/>
            <person name="Chapman J.C."/>
            <person name="Chen Y."/>
            <person name="Clarke G."/>
            <person name="Clark S.Y."/>
            <person name="Clee C.M."/>
            <person name="Clegg S."/>
            <person name="Collier R.E."/>
            <person name="Corby N."/>
            <person name="Crosier M."/>
            <person name="Cummings A.T."/>
            <person name="Davies J."/>
            <person name="Dhami P."/>
            <person name="Dunn M."/>
            <person name="Dutta I."/>
            <person name="Dyer L.W."/>
            <person name="Earthrowl M.E."/>
            <person name="Faulkner L."/>
            <person name="Fleming C.J."/>
            <person name="Frankish A."/>
            <person name="Frankland J.A."/>
            <person name="French L."/>
            <person name="Fricker D.G."/>
            <person name="Garner P."/>
            <person name="Garnett J."/>
            <person name="Ghori J."/>
            <person name="Gilbert J.G.R."/>
            <person name="Glison C."/>
            <person name="Grafham D.V."/>
            <person name="Gribble S."/>
            <person name="Griffiths C."/>
            <person name="Griffiths-Jones S."/>
            <person name="Grocock R."/>
            <person name="Guy J."/>
            <person name="Hall R.E."/>
            <person name="Hammond S."/>
            <person name="Harley J.L."/>
            <person name="Harrison E.S.I."/>
            <person name="Hart E.A."/>
            <person name="Heath P.D."/>
            <person name="Henderson C.D."/>
            <person name="Hopkins B.L."/>
            <person name="Howard P.J."/>
            <person name="Howden P.J."/>
            <person name="Huckle E."/>
            <person name="Johnson C."/>
            <person name="Johnson D."/>
            <person name="Joy A.A."/>
            <person name="Kay M."/>
            <person name="Keenan S."/>
            <person name="Kershaw J.K."/>
            <person name="Kimberley A.M."/>
            <person name="King A."/>
            <person name="Knights A."/>
            <person name="Laird G.K."/>
            <person name="Langford C."/>
            <person name="Lawlor S."/>
            <person name="Leongamornlert D.A."/>
            <person name="Leversha M."/>
            <person name="Lloyd C."/>
            <person name="Lloyd D.M."/>
            <person name="Lovell J."/>
            <person name="Martin S."/>
            <person name="Mashreghi-Mohammadi M."/>
            <person name="Matthews L."/>
            <person name="McLaren S."/>
            <person name="McLay K.E."/>
            <person name="McMurray A."/>
            <person name="Milne S."/>
            <person name="Nickerson T."/>
            <person name="Nisbett J."/>
            <person name="Nordsiek G."/>
            <person name="Pearce A.V."/>
            <person name="Peck A.I."/>
            <person name="Porter K.M."/>
            <person name="Pandian R."/>
            <person name="Pelan S."/>
            <person name="Phillimore B."/>
            <person name="Povey S."/>
            <person name="Ramsey Y."/>
            <person name="Rand V."/>
            <person name="Scharfe M."/>
            <person name="Sehra H.K."/>
            <person name="Shownkeen R."/>
            <person name="Sims S.K."/>
            <person name="Skuce C.D."/>
            <person name="Smith M."/>
            <person name="Steward C.A."/>
            <person name="Swarbreck D."/>
            <person name="Sycamore N."/>
            <person name="Tester J."/>
            <person name="Thorpe A."/>
            <person name="Tracey A."/>
            <person name="Tromans A."/>
            <person name="Thomas D.W."/>
            <person name="Wall M."/>
            <person name="Wallis J.M."/>
            <person name="West A.P."/>
            <person name="Whitehead S.L."/>
            <person name="Willey D.L."/>
            <person name="Williams S.A."/>
            <person name="Wilming L."/>
            <person name="Wray P.W."/>
            <person name="Young L."/>
            <person name="Ashurst J.L."/>
            <person name="Coulson A."/>
            <person name="Blocker H."/>
            <person name="Durbin R.M."/>
            <person name="Sulston J.E."/>
            <person name="Hubbard T."/>
            <person name="Jackson M.J."/>
            <person name="Bentley D.R."/>
            <person name="Beck S."/>
            <person name="Rogers J."/>
            <person name="Dunham I."/>
        </authorList>
    </citation>
    <scope>NUCLEOTIDE SEQUENCE [LARGE SCALE GENOMIC DNA]</scope>
</reference>
<reference key="6">
    <citation type="submission" date="2005-09" db="EMBL/GenBank/DDBJ databases">
        <authorList>
            <person name="Mural R.J."/>
            <person name="Istrail S."/>
            <person name="Sutton G.G."/>
            <person name="Florea L."/>
            <person name="Halpern A.L."/>
            <person name="Mobarry C.M."/>
            <person name="Lippert R."/>
            <person name="Walenz B."/>
            <person name="Shatkay H."/>
            <person name="Dew I."/>
            <person name="Miller J.R."/>
            <person name="Flanigan M.J."/>
            <person name="Edwards N.J."/>
            <person name="Bolanos R."/>
            <person name="Fasulo D."/>
            <person name="Halldorsson B.V."/>
            <person name="Hannenhalli S."/>
            <person name="Turner R."/>
            <person name="Yooseph S."/>
            <person name="Lu F."/>
            <person name="Nusskern D.R."/>
            <person name="Shue B.C."/>
            <person name="Zheng X.H."/>
            <person name="Zhong F."/>
            <person name="Delcher A.L."/>
            <person name="Huson D.H."/>
            <person name="Kravitz S.A."/>
            <person name="Mouchard L."/>
            <person name="Reinert K."/>
            <person name="Remington K.A."/>
            <person name="Clark A.G."/>
            <person name="Waterman M.S."/>
            <person name="Eichler E.E."/>
            <person name="Adams M.D."/>
            <person name="Hunkapiller M.W."/>
            <person name="Myers E.W."/>
            <person name="Venter J.C."/>
        </authorList>
    </citation>
    <scope>NUCLEOTIDE SEQUENCE [LARGE SCALE GENOMIC DNA]</scope>
</reference>
<reference key="7">
    <citation type="journal article" date="2004" name="Genome Res.">
        <title>The status, quality, and expansion of the NIH full-length cDNA project: the Mammalian Gene Collection (MGC).</title>
        <authorList>
            <consortium name="The MGC Project Team"/>
        </authorList>
    </citation>
    <scope>NUCLEOTIDE SEQUENCE [LARGE SCALE MRNA]</scope>
    <source>
        <tissue>Pancreas</tissue>
    </source>
</reference>
<reference key="8">
    <citation type="journal article" date="2006" name="Gastroenterology">
        <title>Hint2, a mitochondrial apoptotic sensitizer down-regulated in hepatocellular carcinoma.</title>
        <authorList>
            <person name="Martin J."/>
            <person name="Magnino F."/>
            <person name="Schmidt K."/>
            <person name="Piguet A.-C."/>
            <person name="Lee J.S."/>
            <person name="Semela D."/>
            <person name="St-Pierre M.V."/>
            <person name="Ziemiecki A."/>
            <person name="Cassio D."/>
            <person name="Brenner C."/>
            <person name="Thorgeirsson S.S."/>
            <person name="Dufour J.-F."/>
        </authorList>
    </citation>
    <scope>FUNCTION</scope>
    <scope>BIOPHYSICOCHEMICAL PROPERTIES</scope>
    <scope>SUBCELLULAR LOCATION</scope>
    <scope>TISSUE SPECIFICITY</scope>
    <scope>ACTIVE SITE</scope>
    <scope>MUTAGENESIS OF HIS-149</scope>
    <scope>CATALYTIC ACTIVITY</scope>
</reference>
<reference key="9">
    <citation type="journal article" date="2008" name="Endocrinology">
        <title>Hint2 is expressed in the mitochondria of H295R cells and is involved in steroidogenesis.</title>
        <authorList>
            <person name="Lenglet S."/>
            <person name="Antigny F."/>
            <person name="Vetterli L."/>
            <person name="Dufour J.-F."/>
            <person name="Rossier M.F."/>
        </authorList>
    </citation>
    <scope>FUNCTION</scope>
    <scope>SUBCELLULAR LOCATION</scope>
</reference>
<reference key="10">
    <citation type="journal article" date="2011" name="BMC Syst. Biol.">
        <title>Initial characterization of the human central proteome.</title>
        <authorList>
            <person name="Burkard T.R."/>
            <person name="Planyavsky M."/>
            <person name="Kaupe I."/>
            <person name="Breitwieser F.P."/>
            <person name="Buerckstuemmer T."/>
            <person name="Bennett K.L."/>
            <person name="Superti-Furga G."/>
            <person name="Colinge J."/>
        </authorList>
    </citation>
    <scope>IDENTIFICATION BY MASS SPECTROMETRY [LARGE SCALE ANALYSIS]</scope>
</reference>
<reference key="11">
    <citation type="journal article" date="2014" name="J. Proteomics">
        <title>An enzyme assisted RP-RPLC approach for in-depth analysis of human liver phosphoproteome.</title>
        <authorList>
            <person name="Bian Y."/>
            <person name="Song C."/>
            <person name="Cheng K."/>
            <person name="Dong M."/>
            <person name="Wang F."/>
            <person name="Huang J."/>
            <person name="Sun D."/>
            <person name="Wang L."/>
            <person name="Ye M."/>
            <person name="Zou H."/>
        </authorList>
    </citation>
    <scope>IDENTIFICATION BY MASS SPECTROMETRY [LARGE SCALE ANALYSIS]</scope>
    <source>
        <tissue>Liver</tissue>
    </source>
</reference>
<reference key="12">
    <citation type="journal article" date="2015" name="Proteomics">
        <title>N-terminome analysis of the human mitochondrial proteome.</title>
        <authorList>
            <person name="Vaca Jacome A.S."/>
            <person name="Rabilloud T."/>
            <person name="Schaeffer-Reiss C."/>
            <person name="Rompais M."/>
            <person name="Ayoub D."/>
            <person name="Lane L."/>
            <person name="Bairoch A."/>
            <person name="Van Dorsselaer A."/>
            <person name="Carapito C."/>
        </authorList>
    </citation>
    <scope>IDENTIFICATION BY MASS SPECTROMETRY [LARGE SCALE ANALYSIS]</scope>
</reference>
<reference key="13">
    <citation type="journal article" date="2020" name="FEBS Lett.">
        <title>Histidine triad nucleotide-binding proteins HINT1 and HINT2 share similar substrate specificities and little affinity for the signaling dinucleotide Ap4A.</title>
        <authorList>
            <person name="Strom A."/>
            <person name="Tong C.L."/>
            <person name="Wagner C.R."/>
        </authorList>
    </citation>
    <scope>FUNCTION</scope>
    <scope>CATALYTIC ACTIVITY</scope>
    <scope>BIOPHYSICOCHEMICAL PROPERTIES</scope>
</reference>
<reference evidence="15 16" key="14">
    <citation type="journal article" date="2013" name="FEBS J.">
        <title>Structural characterization of human histidine triad nucleotide-binding protein 2, a member of the histidine triad superfamily.</title>
        <authorList>
            <person name="Maize K.M."/>
            <person name="Wagner C.R."/>
            <person name="Finzel B.C."/>
        </authorList>
    </citation>
    <scope>X-RAY CRYSTALLOGRAPHY (1.19 ANGSTROMS) OF 37-163 IN COMPLEX WITH AMP</scope>
</reference>
<reference evidence="20 21 22 23" key="15">
    <citation type="submission" date="2013-11" db="PDB data bank">
        <title>Human histidine triad nucleotide-binding protein 2 (hHINT2) in H32 space group at 1.32 A.</title>
        <authorList>
            <person name="Dolot R.M."/>
            <person name="Wlodarczyk A."/>
            <person name="Bujacz G.D."/>
            <person name="Nawrot B."/>
        </authorList>
    </citation>
    <scope>X-RAY CRYSTALLOGRAPHY (1.32 ANGSTROMS)</scope>
</reference>
<reference evidence="17 18 19" key="16">
    <citation type="journal article" date="2017" name="Mol. Pharm.">
        <title>A Crystal Structure Based Guide to the Design of Human Histidine Triad Nucleotide Binding Protein 1 (hHint1) Activated ProTides.</title>
        <authorList>
            <person name="Maize K.M."/>
            <person name="Shah R."/>
            <person name="Strom A."/>
            <person name="Kumarapperuma S."/>
            <person name="Zhou A."/>
            <person name="Wagner C.R."/>
            <person name="Finzel B.C."/>
        </authorList>
    </citation>
    <scope>X-RAY CRYSTALLOGRAPHY (1.45 ANGSTROMS) OF 26-163</scope>
</reference>
<comment type="function">
    <text evidence="4 5 7">Exhibits adenosine 5'-monophosphoramidase activity, hydrolyzing purine nucleotide phosphoramidates with a single phosphate group such as adenosine 5'monophosphoramidate (AMP-NH2) to yield AMP and NH2 (PubMed:16762638, PubMed:31990367). Hydrolyzes adenosine 5'-O-p-nitrophenylphosphoramidate (AMP-pNA) (PubMed:16762638). Hydrolyzes fluorogenic purine nucleoside tryptamine phosphoramidates in vitro (PubMed:31990367). May be involved in steroid biosynthesis (PubMed:18653718). May play a role in apoptosis (PubMed:16762638).</text>
</comment>
<comment type="catalytic activity">
    <reaction evidence="4 7">
        <text>adenosine 5'-phosphoramidate + H2O = AMP + NH4(+)</text>
        <dbReference type="Rhea" id="RHEA:67916"/>
        <dbReference type="ChEBI" id="CHEBI:15377"/>
        <dbReference type="ChEBI" id="CHEBI:28938"/>
        <dbReference type="ChEBI" id="CHEBI:57890"/>
        <dbReference type="ChEBI" id="CHEBI:456215"/>
    </reaction>
</comment>
<comment type="biophysicochemical properties">
    <kinetics>
        <KM evidence="4">128 uM for adenosine 5'-O-p-nitrophenylphosphoramidate</KM>
    </kinetics>
    <phDependence>
        <text evidence="7">Optimum pH is 7-8.</text>
    </phDependence>
</comment>
<comment type="interaction">
    <interactant intactId="EBI-8523143">
        <id>Q9BX68</id>
    </interactant>
    <interactant intactId="EBI-349854">
        <id>P13569</id>
        <label>CFTR</label>
    </interactant>
    <organismsDiffer>false</organismsDiffer>
    <experiments>3</experiments>
</comment>
<comment type="subcellular location">
    <subcellularLocation>
        <location evidence="4 5">Mitochondrion</location>
    </subcellularLocation>
</comment>
<comment type="tissue specificity">
    <text evidence="4">High expression in liver and pancreas. Expression is significantly down-regulated in hepatocellular carcinoma (HCC) patients.</text>
</comment>
<comment type="similarity">
    <text evidence="12">Belongs to the HINT family.</text>
</comment>
<evidence type="ECO:0000250" key="1">
    <source>
        <dbReference type="UniProtKB" id="Q9D0S9"/>
    </source>
</evidence>
<evidence type="ECO:0000255" key="2"/>
<evidence type="ECO:0000255" key="3">
    <source>
        <dbReference type="PROSITE-ProRule" id="PRU00464"/>
    </source>
</evidence>
<evidence type="ECO:0000269" key="4">
    <source>
    </source>
</evidence>
<evidence type="ECO:0000269" key="5">
    <source>
    </source>
</evidence>
<evidence type="ECO:0000269" key="6">
    <source>
    </source>
</evidence>
<evidence type="ECO:0000269" key="7">
    <source>
    </source>
</evidence>
<evidence type="ECO:0000303" key="8">
    <source ref="1"/>
</evidence>
<evidence type="ECO:0000303" key="9">
    <source ref="2"/>
</evidence>
<evidence type="ECO:0000303" key="10">
    <source ref="3"/>
</evidence>
<evidence type="ECO:0000303" key="11">
    <source ref="4"/>
</evidence>
<evidence type="ECO:0000305" key="12"/>
<evidence type="ECO:0000305" key="13">
    <source>
    </source>
</evidence>
<evidence type="ECO:0000312" key="14">
    <source>
        <dbReference type="HGNC" id="HGNC:18344"/>
    </source>
</evidence>
<evidence type="ECO:0007744" key="15">
    <source>
        <dbReference type="PDB" id="4INC"/>
    </source>
</evidence>
<evidence type="ECO:0007744" key="16">
    <source>
        <dbReference type="PDB" id="4INI"/>
    </source>
</evidence>
<evidence type="ECO:0007744" key="17">
    <source>
        <dbReference type="PDB" id="5KM5"/>
    </source>
</evidence>
<evidence type="ECO:0007744" key="18">
    <source>
        <dbReference type="PDB" id="5KM8"/>
    </source>
</evidence>
<evidence type="ECO:0007744" key="19">
    <source>
        <dbReference type="PDB" id="5KM9"/>
    </source>
</evidence>
<evidence type="ECO:0007744" key="20">
    <source>
        <dbReference type="PDB" id="6YI0"/>
    </source>
</evidence>
<evidence type="ECO:0007744" key="21">
    <source>
        <dbReference type="PDB" id="6YPR"/>
    </source>
</evidence>
<evidence type="ECO:0007744" key="22">
    <source>
        <dbReference type="PDB" id="6YPX"/>
    </source>
</evidence>
<evidence type="ECO:0007744" key="23">
    <source>
        <dbReference type="PDB" id="6YQD"/>
    </source>
</evidence>
<evidence type="ECO:0007829" key="24">
    <source>
        <dbReference type="PDB" id="4INC"/>
    </source>
</evidence>
<feature type="transit peptide" description="Mitochondrion" evidence="2">
    <location>
        <begin position="1"/>
        <end position="17"/>
    </location>
</feature>
<feature type="chain" id="PRO_0000109786" description="Adenosine 5'-monophosphoramidase HINT2">
    <location>
        <begin position="18"/>
        <end position="163"/>
    </location>
</feature>
<feature type="domain" description="HIT" evidence="3">
    <location>
        <begin position="55"/>
        <end position="163"/>
    </location>
</feature>
<feature type="short sequence motif" description="Histidine triad motif">
    <location>
        <begin position="147"/>
        <end position="151"/>
    </location>
</feature>
<feature type="active site" description="Tele-AMP-histidine intermediate" evidence="4">
    <location>
        <position position="149"/>
    </location>
</feature>
<feature type="binding site" evidence="6 16">
    <location>
        <position position="63"/>
    </location>
    <ligand>
        <name>AMP</name>
        <dbReference type="ChEBI" id="CHEBI:456215"/>
    </ligand>
</feature>
<feature type="binding site" evidence="6 16">
    <location>
        <position position="80"/>
    </location>
    <ligand>
        <name>AMP</name>
        <dbReference type="ChEBI" id="CHEBI:456215"/>
    </ligand>
</feature>
<feature type="binding site" evidence="6 16">
    <location>
        <position position="136"/>
    </location>
    <ligand>
        <name>AMP</name>
        <dbReference type="ChEBI" id="CHEBI:456215"/>
    </ligand>
</feature>
<feature type="binding site" evidence="6 16">
    <location>
        <begin position="142"/>
        <end position="145"/>
    </location>
    <ligand>
        <name>AMP</name>
        <dbReference type="ChEBI" id="CHEBI:456215"/>
    </ligand>
</feature>
<feature type="binding site" evidence="6 16">
    <location>
        <begin position="149"/>
        <end position="151"/>
    </location>
    <ligand>
        <name>AMP</name>
        <dbReference type="ChEBI" id="CHEBI:456215"/>
    </ligand>
</feature>
<feature type="modified residue" description="N6-acetyllysine" evidence="1">
    <location>
        <position position="119"/>
    </location>
</feature>
<feature type="modified residue" description="N6-acetyllysine" evidence="1">
    <location>
        <position position="139"/>
    </location>
</feature>
<feature type="mutagenesis site" description="Loss of adenosine phosphoramidase activity." evidence="4">
    <original>H</original>
    <variation>A</variation>
    <location>
        <position position="149"/>
    </location>
</feature>
<feature type="helix" evidence="24">
    <location>
        <begin position="56"/>
        <end position="60"/>
    </location>
</feature>
<feature type="helix" evidence="24">
    <location>
        <begin position="65"/>
        <end position="67"/>
    </location>
</feature>
<feature type="strand" evidence="24">
    <location>
        <begin position="68"/>
        <end position="71"/>
    </location>
</feature>
<feature type="strand" evidence="24">
    <location>
        <begin position="73"/>
        <end position="79"/>
    </location>
</feature>
<feature type="strand" evidence="24">
    <location>
        <begin position="84"/>
        <end position="95"/>
    </location>
</feature>
<feature type="helix" evidence="24">
    <location>
        <begin position="100"/>
        <end position="102"/>
    </location>
</feature>
<feature type="helix" evidence="24">
    <location>
        <begin position="105"/>
        <end position="107"/>
    </location>
</feature>
<feature type="helix" evidence="24">
    <location>
        <begin position="108"/>
        <end position="124"/>
    </location>
</feature>
<feature type="strand" evidence="24">
    <location>
        <begin position="131"/>
        <end position="137"/>
    </location>
</feature>
<feature type="turn" evidence="24">
    <location>
        <begin position="138"/>
        <end position="142"/>
    </location>
</feature>
<feature type="strand" evidence="24">
    <location>
        <begin position="145"/>
        <end position="147"/>
    </location>
</feature>
<feature type="strand" evidence="24">
    <location>
        <begin position="150"/>
        <end position="156"/>
    </location>
</feature>
<accession>Q9BX68</accession>
<accession>Q5TCW3</accession>
<sequence>MAAAVVLAAGLRAARRAVAATGVRGGQVRGAAGVTDGNEVAKAQQATPGGAAPTIFSRILDKSLPADILYEDQQCLVFRDVAPQAPVHFLVIPKKPIPRISQAEEEDQQLLGHLLLVAKQTAKAEGLGDGYRLVINDGKLGAQSVYHLHIHVLGGRQLQWPPG</sequence>
<organism>
    <name type="scientific">Homo sapiens</name>
    <name type="common">Human</name>
    <dbReference type="NCBI Taxonomy" id="9606"/>
    <lineage>
        <taxon>Eukaryota</taxon>
        <taxon>Metazoa</taxon>
        <taxon>Chordata</taxon>
        <taxon>Craniata</taxon>
        <taxon>Vertebrata</taxon>
        <taxon>Euteleostomi</taxon>
        <taxon>Mammalia</taxon>
        <taxon>Eutheria</taxon>
        <taxon>Euarchontoglires</taxon>
        <taxon>Primates</taxon>
        <taxon>Haplorrhini</taxon>
        <taxon>Catarrhini</taxon>
        <taxon>Hominidae</taxon>
        <taxon>Homo</taxon>
    </lineage>
</organism>
<name>HINT2_HUMAN</name>
<proteinExistence type="evidence at protein level"/>
<keyword id="KW-0002">3D-structure</keyword>
<keyword id="KW-0007">Acetylation</keyword>
<keyword id="KW-0053">Apoptosis</keyword>
<keyword id="KW-0378">Hydrolase</keyword>
<keyword id="KW-0444">Lipid biosynthesis</keyword>
<keyword id="KW-0443">Lipid metabolism</keyword>
<keyword id="KW-0496">Mitochondrion</keyword>
<keyword id="KW-0547">Nucleotide-binding</keyword>
<keyword id="KW-1267">Proteomics identification</keyword>
<keyword id="KW-1185">Reference proteome</keyword>
<keyword id="KW-0752">Steroid biosynthesis</keyword>
<keyword id="KW-0809">Transit peptide</keyword>
<dbReference type="EC" id="3.9.1.-" evidence="4 7"/>
<dbReference type="EMBL" id="AF356515">
    <property type="protein sequence ID" value="AAK37562.1"/>
    <property type="molecule type" value="mRNA"/>
</dbReference>
<dbReference type="EMBL" id="AY033094">
    <property type="protein sequence ID" value="AAK53455.1"/>
    <property type="molecule type" value="mRNA"/>
</dbReference>
<dbReference type="EMBL" id="AF490476">
    <property type="protein sequence ID" value="AAM09526.1"/>
    <property type="molecule type" value="Genomic_DNA"/>
</dbReference>
<dbReference type="EMBL" id="AF356875">
    <property type="protein sequence ID" value="AAM00221.1"/>
    <property type="molecule type" value="mRNA"/>
</dbReference>
<dbReference type="EMBL" id="AL133410">
    <property type="status" value="NOT_ANNOTATED_CDS"/>
    <property type="molecule type" value="Genomic_DNA"/>
</dbReference>
<dbReference type="EMBL" id="CH471071">
    <property type="protein sequence ID" value="EAW58332.1"/>
    <property type="molecule type" value="Genomic_DNA"/>
</dbReference>
<dbReference type="EMBL" id="BC047737">
    <property type="protein sequence ID" value="AAH47737.1"/>
    <property type="molecule type" value="mRNA"/>
</dbReference>
<dbReference type="CCDS" id="CCDS6594.1"/>
<dbReference type="RefSeq" id="NP_115982.1">
    <property type="nucleotide sequence ID" value="NM_032593.3"/>
</dbReference>
<dbReference type="PDB" id="4INC">
    <property type="method" value="X-ray"/>
    <property type="resolution" value="1.19 A"/>
    <property type="chains" value="A/B=37-163"/>
</dbReference>
<dbReference type="PDB" id="4INI">
    <property type="method" value="X-ray"/>
    <property type="resolution" value="1.65 A"/>
    <property type="chains" value="A/B=37-163"/>
</dbReference>
<dbReference type="PDB" id="5KM5">
    <property type="method" value="X-ray"/>
    <property type="resolution" value="2.10 A"/>
    <property type="chains" value="A/B=26-163"/>
</dbReference>
<dbReference type="PDB" id="5KM8">
    <property type="method" value="X-ray"/>
    <property type="resolution" value="2.00 A"/>
    <property type="chains" value="A/B=26-163"/>
</dbReference>
<dbReference type="PDB" id="5KM9">
    <property type="method" value="X-ray"/>
    <property type="resolution" value="1.45 A"/>
    <property type="chains" value="A/B=26-163"/>
</dbReference>
<dbReference type="PDB" id="6YI0">
    <property type="method" value="X-ray"/>
    <property type="resolution" value="1.65 A"/>
    <property type="chains" value="AAA/BBB/CCC/DDD=1-163"/>
</dbReference>
<dbReference type="PDB" id="6YPR">
    <property type="method" value="X-ray"/>
    <property type="resolution" value="1.26 A"/>
    <property type="chains" value="AAA=1-163"/>
</dbReference>
<dbReference type="PDB" id="6YPX">
    <property type="method" value="X-ray"/>
    <property type="resolution" value="2.11 A"/>
    <property type="chains" value="AAA/BBB/CCC/DDD=1-163"/>
</dbReference>
<dbReference type="PDB" id="6YQD">
    <property type="method" value="X-ray"/>
    <property type="resolution" value="1.41 A"/>
    <property type="chains" value="AAA/BBB=1-163"/>
</dbReference>
<dbReference type="PDB" id="6YVP">
    <property type="method" value="X-ray"/>
    <property type="resolution" value="2.77 A"/>
    <property type="chains" value="AAA/BBB=1-163"/>
</dbReference>
<dbReference type="PDBsum" id="4INC"/>
<dbReference type="PDBsum" id="4INI"/>
<dbReference type="PDBsum" id="5KM5"/>
<dbReference type="PDBsum" id="5KM8"/>
<dbReference type="PDBsum" id="5KM9"/>
<dbReference type="PDBsum" id="6YI0"/>
<dbReference type="PDBsum" id="6YPR"/>
<dbReference type="PDBsum" id="6YPX"/>
<dbReference type="PDBsum" id="6YQD"/>
<dbReference type="PDBsum" id="6YVP"/>
<dbReference type="SMR" id="Q9BX68"/>
<dbReference type="BioGRID" id="124200">
    <property type="interactions" value="342"/>
</dbReference>
<dbReference type="FunCoup" id="Q9BX68">
    <property type="interactions" value="1199"/>
</dbReference>
<dbReference type="IntAct" id="Q9BX68">
    <property type="interactions" value="40"/>
</dbReference>
<dbReference type="MINT" id="Q9BX68"/>
<dbReference type="STRING" id="9606.ENSP00000259667"/>
<dbReference type="GlyGen" id="Q9BX68">
    <property type="glycosylation" value="1 site"/>
</dbReference>
<dbReference type="iPTMnet" id="Q9BX68"/>
<dbReference type="PhosphoSitePlus" id="Q9BX68"/>
<dbReference type="SwissPalm" id="Q9BX68"/>
<dbReference type="BioMuta" id="HINT2"/>
<dbReference type="DMDM" id="51701612"/>
<dbReference type="OGP" id="Q9BX68"/>
<dbReference type="jPOST" id="Q9BX68"/>
<dbReference type="MassIVE" id="Q9BX68"/>
<dbReference type="PaxDb" id="9606-ENSP00000259667"/>
<dbReference type="PeptideAtlas" id="Q9BX68"/>
<dbReference type="ProteomicsDB" id="79368"/>
<dbReference type="Pumba" id="Q9BX68"/>
<dbReference type="TopDownProteomics" id="Q9BX68"/>
<dbReference type="Antibodypedia" id="11787">
    <property type="antibodies" value="130 antibodies from 19 providers"/>
</dbReference>
<dbReference type="DNASU" id="84681"/>
<dbReference type="Ensembl" id="ENST00000259667.6">
    <property type="protein sequence ID" value="ENSP00000259667.5"/>
    <property type="gene ID" value="ENSG00000137133.11"/>
</dbReference>
<dbReference type="GeneID" id="84681"/>
<dbReference type="KEGG" id="hsa:84681"/>
<dbReference type="MANE-Select" id="ENST00000259667.6">
    <property type="protein sequence ID" value="ENSP00000259667.5"/>
    <property type="RefSeq nucleotide sequence ID" value="NM_032593.3"/>
    <property type="RefSeq protein sequence ID" value="NP_115982.1"/>
</dbReference>
<dbReference type="UCSC" id="uc003zyh.4">
    <property type="organism name" value="human"/>
</dbReference>
<dbReference type="AGR" id="HGNC:18344"/>
<dbReference type="CTD" id="84681"/>
<dbReference type="DisGeNET" id="84681"/>
<dbReference type="GeneCards" id="HINT2"/>
<dbReference type="HGNC" id="HGNC:18344">
    <property type="gene designation" value="HINT2"/>
</dbReference>
<dbReference type="HPA" id="ENSG00000137133">
    <property type="expression patterns" value="Low tissue specificity"/>
</dbReference>
<dbReference type="MIM" id="609997">
    <property type="type" value="gene"/>
</dbReference>
<dbReference type="neXtProt" id="NX_Q9BX68"/>
<dbReference type="OpenTargets" id="ENSG00000137133"/>
<dbReference type="PharmGKB" id="PA29287"/>
<dbReference type="VEuPathDB" id="HostDB:ENSG00000137133"/>
<dbReference type="eggNOG" id="KOG3275">
    <property type="taxonomic scope" value="Eukaryota"/>
</dbReference>
<dbReference type="GeneTree" id="ENSGT00940000157905"/>
<dbReference type="HOGENOM" id="CLU_056776_8_0_1"/>
<dbReference type="InParanoid" id="Q9BX68"/>
<dbReference type="OMA" id="YRVVMNC"/>
<dbReference type="OrthoDB" id="672793at2759"/>
<dbReference type="PAN-GO" id="Q9BX68">
    <property type="GO annotations" value="3 GO annotations based on evolutionary models"/>
</dbReference>
<dbReference type="PhylomeDB" id="Q9BX68"/>
<dbReference type="TreeFam" id="TF314862"/>
<dbReference type="PathwayCommons" id="Q9BX68"/>
<dbReference type="Reactome" id="R-HSA-9013405">
    <property type="pathway name" value="RHOD GTPase cycle"/>
</dbReference>
<dbReference type="SABIO-RK" id="Q9BX68"/>
<dbReference type="SignaLink" id="Q9BX68"/>
<dbReference type="BioGRID-ORCS" id="84681">
    <property type="hits" value="12 hits in 1159 CRISPR screens"/>
</dbReference>
<dbReference type="CD-CODE" id="91857CE7">
    <property type="entry name" value="Nucleolus"/>
</dbReference>
<dbReference type="ChiTaRS" id="HINT2">
    <property type="organism name" value="human"/>
</dbReference>
<dbReference type="EvolutionaryTrace" id="Q9BX68"/>
<dbReference type="GenomeRNAi" id="84681"/>
<dbReference type="Pharos" id="Q9BX68">
    <property type="development level" value="Tbio"/>
</dbReference>
<dbReference type="PRO" id="PR:Q9BX68"/>
<dbReference type="Proteomes" id="UP000005640">
    <property type="component" value="Chromosome 9"/>
</dbReference>
<dbReference type="RNAct" id="Q9BX68">
    <property type="molecule type" value="protein"/>
</dbReference>
<dbReference type="Bgee" id="ENSG00000137133">
    <property type="expression patterns" value="Expressed in apex of heart and 96 other cell types or tissues"/>
</dbReference>
<dbReference type="GO" id="GO:0005737">
    <property type="term" value="C:cytoplasm"/>
    <property type="evidence" value="ECO:0000318"/>
    <property type="project" value="GO_Central"/>
</dbReference>
<dbReference type="GO" id="GO:0005759">
    <property type="term" value="C:mitochondrial matrix"/>
    <property type="evidence" value="ECO:0007669"/>
    <property type="project" value="Ensembl"/>
</dbReference>
<dbReference type="GO" id="GO:0005741">
    <property type="term" value="C:mitochondrial outer membrane"/>
    <property type="evidence" value="ECO:0000304"/>
    <property type="project" value="Reactome"/>
</dbReference>
<dbReference type="GO" id="GO:0005739">
    <property type="term" value="C:mitochondrion"/>
    <property type="evidence" value="ECO:0000314"/>
    <property type="project" value="UniProtKB"/>
</dbReference>
<dbReference type="GO" id="GO:0043530">
    <property type="term" value="F:adenosine 5'-monophosphoramidase activity"/>
    <property type="evidence" value="ECO:0000314"/>
    <property type="project" value="UniProtKB"/>
</dbReference>
<dbReference type="GO" id="GO:0016787">
    <property type="term" value="F:hydrolase activity"/>
    <property type="evidence" value="ECO:0000318"/>
    <property type="project" value="GO_Central"/>
</dbReference>
<dbReference type="GO" id="GO:0000166">
    <property type="term" value="F:nucleotide binding"/>
    <property type="evidence" value="ECO:0007669"/>
    <property type="project" value="UniProtKB-KW"/>
</dbReference>
<dbReference type="GO" id="GO:0006915">
    <property type="term" value="P:apoptotic process"/>
    <property type="evidence" value="ECO:0007669"/>
    <property type="project" value="UniProtKB-KW"/>
</dbReference>
<dbReference type="GO" id="GO:0016042">
    <property type="term" value="P:lipid catabolic process"/>
    <property type="evidence" value="ECO:0007669"/>
    <property type="project" value="Ensembl"/>
</dbReference>
<dbReference type="GO" id="GO:0006694">
    <property type="term" value="P:steroid biosynthetic process"/>
    <property type="evidence" value="ECO:0007669"/>
    <property type="project" value="UniProtKB-KW"/>
</dbReference>
<dbReference type="CDD" id="cd01276">
    <property type="entry name" value="PKCI_related"/>
    <property type="match status" value="1"/>
</dbReference>
<dbReference type="FunFam" id="3.30.428.10:FF:000005">
    <property type="entry name" value="Histidine triad nucleotide-binding protein 1"/>
    <property type="match status" value="1"/>
</dbReference>
<dbReference type="Gene3D" id="3.30.428.10">
    <property type="entry name" value="HIT-like"/>
    <property type="match status" value="1"/>
</dbReference>
<dbReference type="InterPro" id="IPR019808">
    <property type="entry name" value="Histidine_triad_CS"/>
</dbReference>
<dbReference type="InterPro" id="IPR001310">
    <property type="entry name" value="Histidine_triad_HIT"/>
</dbReference>
<dbReference type="InterPro" id="IPR011146">
    <property type="entry name" value="HIT-like"/>
</dbReference>
<dbReference type="InterPro" id="IPR036265">
    <property type="entry name" value="HIT-like_sf"/>
</dbReference>
<dbReference type="PANTHER" id="PTHR23089">
    <property type="entry name" value="HISTIDINE TRIAD HIT PROTEIN"/>
    <property type="match status" value="1"/>
</dbReference>
<dbReference type="Pfam" id="PF01230">
    <property type="entry name" value="HIT"/>
    <property type="match status" value="1"/>
</dbReference>
<dbReference type="PRINTS" id="PR00332">
    <property type="entry name" value="HISTRIAD"/>
</dbReference>
<dbReference type="SUPFAM" id="SSF54197">
    <property type="entry name" value="HIT-like"/>
    <property type="match status" value="1"/>
</dbReference>
<dbReference type="PROSITE" id="PS00892">
    <property type="entry name" value="HIT_1"/>
    <property type="match status" value="1"/>
</dbReference>
<dbReference type="PROSITE" id="PS51084">
    <property type="entry name" value="HIT_2"/>
    <property type="match status" value="1"/>
</dbReference>